<accession>A4GCH7</accession>
<sequence>MSLLTEVETYVLSIVPSGPLKAEIAQRLEDVFAGKNTDLEALMEWLKTRPILSPLTKGILGFVFTLTVPSERGLQRRRFVQNALNGNGDPNNMDRAVKLYRKLKREITFHGAKEIALSYSAGALASCMGLIYNRMGAVTTESAFGLICATCEQIADSQHKSHRQMVITTNPLIRHENRMVLASTTAKAMEQMAGSSEQAAEAMEVASQARQMVQAMRAIGTHPSSSTGLKNDLLENLQAYQKRMGVQMQRFK</sequence>
<organismHost>
    <name type="scientific">Aves</name>
    <dbReference type="NCBI Taxonomy" id="8782"/>
</organismHost>
<organismHost>
    <name type="scientific">Homo sapiens</name>
    <name type="common">Human</name>
    <dbReference type="NCBI Taxonomy" id="9606"/>
</organismHost>
<organismHost>
    <name type="scientific">Sus scrofa</name>
    <name type="common">Pig</name>
    <dbReference type="NCBI Taxonomy" id="9823"/>
</organismHost>
<organism>
    <name type="scientific">Influenza A virus (strain A/Chile/1/1983 H1N1)</name>
    <dbReference type="NCBI Taxonomy" id="380985"/>
    <lineage>
        <taxon>Viruses</taxon>
        <taxon>Riboviria</taxon>
        <taxon>Orthornavirae</taxon>
        <taxon>Negarnaviricota</taxon>
        <taxon>Polyploviricotina</taxon>
        <taxon>Insthoviricetes</taxon>
        <taxon>Articulavirales</taxon>
        <taxon>Orthomyxoviridae</taxon>
        <taxon>Alphainfluenzavirus</taxon>
        <taxon>Alphainfluenzavirus influenzae</taxon>
        <taxon>Influenza A virus</taxon>
    </lineage>
</organism>
<evidence type="ECO:0000255" key="1">
    <source>
        <dbReference type="HAMAP-Rule" id="MF_04068"/>
    </source>
</evidence>
<feature type="chain" id="PRO_0000372912" description="Matrix protein 1">
    <location>
        <begin position="1"/>
        <end position="252"/>
    </location>
</feature>
<feature type="region of interest" description="Membrane-binding" evidence="1">
    <location>
        <begin position="1"/>
        <end position="164"/>
    </location>
</feature>
<feature type="region of interest" description="RNP-binding" evidence="1">
    <location>
        <begin position="165"/>
        <end position="252"/>
    </location>
</feature>
<feature type="short sequence motif" description="Nuclear localization signal" evidence="1">
    <location>
        <begin position="101"/>
        <end position="105"/>
    </location>
</feature>
<reference key="1">
    <citation type="submission" date="2007-03" db="EMBL/GenBank/DDBJ databases">
        <title>The NIAID influenza genome sequencing project.</title>
        <authorList>
            <person name="Ghedin E."/>
            <person name="Spiro D."/>
            <person name="Miller N."/>
            <person name="Zaborsky J."/>
            <person name="Feldblyum T."/>
            <person name="Subbu V."/>
            <person name="Shumway M."/>
            <person name="Sparenborg J."/>
            <person name="Groveman L."/>
            <person name="Halpin R."/>
            <person name="Sitz J."/>
            <person name="Koo H."/>
            <person name="Salzberg S.L."/>
            <person name="Webster R.G."/>
            <person name="Hoffmann E."/>
            <person name="Krauss S."/>
            <person name="Naeve C."/>
            <person name="Bao Y."/>
            <person name="Bolotov P."/>
            <person name="Dernovoy D."/>
            <person name="Kiryutin B."/>
            <person name="Lipman D.J."/>
            <person name="Tatusova T."/>
        </authorList>
    </citation>
    <scope>NUCLEOTIDE SEQUENCE [GENOMIC RNA]</scope>
</reference>
<reference key="2">
    <citation type="submission" date="2007-03" db="EMBL/GenBank/DDBJ databases">
        <authorList>
            <consortium name="The NIAID Influenza Genome Sequencing Consortium"/>
        </authorList>
    </citation>
    <scope>NUCLEOTIDE SEQUENCE [GENOMIC RNA]</scope>
</reference>
<comment type="function">
    <text evidence="1">Plays critical roles in virus replication, from virus entry and uncoating to assembly and budding of the virus particle. M1 binding to ribonucleocapsids (RNPs) in nucleus seems to inhibit viral transcription. Interaction of viral NEP with M1-RNP is thought to promote nuclear export of the complex, which is targeted to the virion assembly site at the apical plasma membrane in polarized epithelial cells. Interactions with NA and HA may bring M1, a non-raft-associated protein, into lipid rafts. Forms a continuous shell on the inner side of the lipid bilayer in virion, where it binds the RNP. During virus entry into cell, the M2 ion channel acidifies the internal virion core, inducing M1 dissociation from the RNP. M1-free RNPs are transported to the nucleus, where viral transcription and replication can take place.</text>
</comment>
<comment type="function">
    <text evidence="1">Determines the virion's shape: spherical or filamentous. Clinical isolates of influenza are characterized by the presence of significant proportion of filamentous virions, whereas after multiple passage on eggs or cell culture, virions have only spherical morphology. Filamentous virions are thought to be important to infect neighboring cells, and spherical virions more suited to spread through aerosol between hosts organisms.</text>
</comment>
<comment type="subunit">
    <text evidence="1">Homodimer and homomultimer. Interacts with NEP. Binds ribonucleocapsid by both interacting with genomic RNA and NP protein. May interact with HA and NA. Cannot bind NP without genomic RNA.</text>
</comment>
<comment type="subcellular location">
    <subcellularLocation>
        <location evidence="1">Virion membrane</location>
        <topology evidence="1">Peripheral membrane protein</topology>
        <orientation evidence="1">Cytoplasmic side</orientation>
    </subcellularLocation>
    <subcellularLocation>
        <location evidence="1">Host nucleus</location>
    </subcellularLocation>
</comment>
<comment type="alternative products">
    <event type="alternative splicing"/>
    <isoform>
        <id>A4GCH7-1</id>
        <name>M1</name>
        <sequence type="displayed"/>
    </isoform>
    <isoform>
        <id>A4GCH6-1</id>
        <name>M2</name>
        <sequence type="external"/>
    </isoform>
    <text>Only the first 9 residues are shared by the 2 isoforms.</text>
</comment>
<comment type="miscellaneous">
    <text evidence="1">Most abundant protein in virion. When expressed alone can form virus-like particles in transfected cells.</text>
</comment>
<comment type="similarity">
    <text evidence="1">Belongs to the influenza viruses Matrix protein M1 family.</text>
</comment>
<proteinExistence type="inferred from homology"/>
<gene>
    <name evidence="1" type="primary">M</name>
</gene>
<keyword id="KW-0025">Alternative splicing</keyword>
<keyword id="KW-1048">Host nucleus</keyword>
<keyword id="KW-0472">Membrane</keyword>
<keyword id="KW-0694">RNA-binding</keyword>
<keyword id="KW-0468">Viral matrix protein</keyword>
<keyword id="KW-0946">Virion</keyword>
<name>M1_I83A1</name>
<dbReference type="EMBL" id="CY020438">
    <property type="protein sequence ID" value="ABO38341.1"/>
    <property type="molecule type" value="Viral_cRNA"/>
</dbReference>
<dbReference type="SMR" id="A4GCH7"/>
<dbReference type="Proteomes" id="UP000008582">
    <property type="component" value="Genome"/>
</dbReference>
<dbReference type="GO" id="GO:0042025">
    <property type="term" value="C:host cell nucleus"/>
    <property type="evidence" value="ECO:0007669"/>
    <property type="project" value="UniProtKB-SubCell"/>
</dbReference>
<dbReference type="GO" id="GO:0016020">
    <property type="term" value="C:membrane"/>
    <property type="evidence" value="ECO:0007669"/>
    <property type="project" value="UniProtKB-KW"/>
</dbReference>
<dbReference type="GO" id="GO:0055036">
    <property type="term" value="C:virion membrane"/>
    <property type="evidence" value="ECO:0007669"/>
    <property type="project" value="UniProtKB-SubCell"/>
</dbReference>
<dbReference type="GO" id="GO:0003723">
    <property type="term" value="F:RNA binding"/>
    <property type="evidence" value="ECO:0007669"/>
    <property type="project" value="UniProtKB-UniRule"/>
</dbReference>
<dbReference type="GO" id="GO:0039660">
    <property type="term" value="F:structural constituent of virion"/>
    <property type="evidence" value="ECO:0007669"/>
    <property type="project" value="UniProtKB-UniRule"/>
</dbReference>
<dbReference type="GO" id="GO:0046761">
    <property type="term" value="P:viral budding from plasma membrane"/>
    <property type="evidence" value="ECO:0007669"/>
    <property type="project" value="UniProtKB-UniRule"/>
</dbReference>
<dbReference type="FunFam" id="1.10.10.180:FF:000001">
    <property type="entry name" value="Matrix protein 1"/>
    <property type="match status" value="1"/>
</dbReference>
<dbReference type="FunFam" id="1.20.91.10:FF:000001">
    <property type="entry name" value="Matrix protein 1"/>
    <property type="match status" value="1"/>
</dbReference>
<dbReference type="Gene3D" id="1.10.10.180">
    <property type="match status" value="1"/>
</dbReference>
<dbReference type="Gene3D" id="1.20.91.10">
    <property type="match status" value="1"/>
</dbReference>
<dbReference type="HAMAP" id="MF_04068">
    <property type="entry name" value="INFV_M1"/>
    <property type="match status" value="1"/>
</dbReference>
<dbReference type="InterPro" id="IPR036039">
    <property type="entry name" value="Flu_matrix_M1"/>
</dbReference>
<dbReference type="InterPro" id="IPR013188">
    <property type="entry name" value="Flu_matrix_M1_C"/>
</dbReference>
<dbReference type="InterPro" id="IPR001561">
    <property type="entry name" value="Flu_matrix_M1_N"/>
</dbReference>
<dbReference type="InterPro" id="IPR015423">
    <property type="entry name" value="Flu_matrix_M1_N_sub1"/>
</dbReference>
<dbReference type="InterPro" id="IPR015799">
    <property type="entry name" value="Flu_matrix_M1_N_sub2"/>
</dbReference>
<dbReference type="InterPro" id="IPR037533">
    <property type="entry name" value="INFV_M1"/>
</dbReference>
<dbReference type="Pfam" id="PF00598">
    <property type="entry name" value="Flu_M1"/>
    <property type="match status" value="1"/>
</dbReference>
<dbReference type="Pfam" id="PF08289">
    <property type="entry name" value="Flu_M1_C"/>
    <property type="match status" value="1"/>
</dbReference>
<dbReference type="SMART" id="SM00759">
    <property type="entry name" value="Flu_M1_C"/>
    <property type="match status" value="1"/>
</dbReference>
<dbReference type="SUPFAM" id="SSF48145">
    <property type="entry name" value="Influenza virus matrix protein M1"/>
    <property type="match status" value="1"/>
</dbReference>
<protein>
    <recommendedName>
        <fullName evidence="1">Matrix protein 1</fullName>
        <shortName evidence="1">M1</shortName>
    </recommendedName>
</protein>